<organism>
    <name type="scientific">Mycobacterium leprae (strain TN)</name>
    <dbReference type="NCBI Taxonomy" id="272631"/>
    <lineage>
        <taxon>Bacteria</taxon>
        <taxon>Bacillati</taxon>
        <taxon>Actinomycetota</taxon>
        <taxon>Actinomycetes</taxon>
        <taxon>Mycobacteriales</taxon>
        <taxon>Mycobacteriaceae</taxon>
        <taxon>Mycobacterium</taxon>
    </lineage>
</organism>
<sequence length="143" mass="15771">MLDSDARLASDLSLAVMRLARQLRFRNPQSPVSLSQLSALTTLANEGAMTPGALAIRERVRPPSMTRVIASLADMGFVDREPHPVDGRQVLVSVSQSGAELVKAARRARQEWLVERLMTLNSDKRDILRNAADLILELIDESP</sequence>
<name>Y2140_MYCLE</name>
<evidence type="ECO:0000250" key="1">
    <source>
        <dbReference type="UniProtKB" id="P9WMF1"/>
    </source>
</evidence>
<evidence type="ECO:0000255" key="2">
    <source>
        <dbReference type="PROSITE-ProRule" id="PRU00345"/>
    </source>
</evidence>
<protein>
    <recommendedName>
        <fullName>Uncharacterized HTH-type transcriptional regulator ML2140</fullName>
    </recommendedName>
</protein>
<dbReference type="EMBL" id="Z99494">
    <property type="protein sequence ID" value="CAB16671.1"/>
    <property type="molecule type" value="Genomic_DNA"/>
</dbReference>
<dbReference type="EMBL" id="AL583924">
    <property type="protein sequence ID" value="CAC31095.1"/>
    <property type="molecule type" value="Genomic_DNA"/>
</dbReference>
<dbReference type="PIR" id="T45347">
    <property type="entry name" value="T45347"/>
</dbReference>
<dbReference type="RefSeq" id="NP_302411.1">
    <property type="nucleotide sequence ID" value="NC_002677.1"/>
</dbReference>
<dbReference type="RefSeq" id="WP_010908731.1">
    <property type="nucleotide sequence ID" value="NC_002677.1"/>
</dbReference>
<dbReference type="SMR" id="O33060"/>
<dbReference type="STRING" id="272631.gene:17575993"/>
<dbReference type="KEGG" id="mle:ML2140"/>
<dbReference type="PATRIC" id="fig|272631.5.peg.4044"/>
<dbReference type="Leproma" id="ML2140"/>
<dbReference type="eggNOG" id="COG1846">
    <property type="taxonomic scope" value="Bacteria"/>
</dbReference>
<dbReference type="HOGENOM" id="CLU_083287_15_1_11"/>
<dbReference type="OrthoDB" id="9804055at2"/>
<dbReference type="Proteomes" id="UP000000806">
    <property type="component" value="Chromosome"/>
</dbReference>
<dbReference type="GO" id="GO:0003677">
    <property type="term" value="F:DNA binding"/>
    <property type="evidence" value="ECO:0007669"/>
    <property type="project" value="UniProtKB-KW"/>
</dbReference>
<dbReference type="GO" id="GO:0003700">
    <property type="term" value="F:DNA-binding transcription factor activity"/>
    <property type="evidence" value="ECO:0007669"/>
    <property type="project" value="InterPro"/>
</dbReference>
<dbReference type="Gene3D" id="1.10.10.10">
    <property type="entry name" value="Winged helix-like DNA-binding domain superfamily/Winged helix DNA-binding domain"/>
    <property type="match status" value="1"/>
</dbReference>
<dbReference type="InterPro" id="IPR052526">
    <property type="entry name" value="HTH-type_Bedaq_tolerance"/>
</dbReference>
<dbReference type="InterPro" id="IPR000835">
    <property type="entry name" value="HTH_MarR-typ"/>
</dbReference>
<dbReference type="InterPro" id="IPR023187">
    <property type="entry name" value="Tscrpt_reg_MarR-type_CS"/>
</dbReference>
<dbReference type="InterPro" id="IPR036388">
    <property type="entry name" value="WH-like_DNA-bd_sf"/>
</dbReference>
<dbReference type="InterPro" id="IPR036390">
    <property type="entry name" value="WH_DNA-bd_sf"/>
</dbReference>
<dbReference type="PANTHER" id="PTHR39515">
    <property type="entry name" value="CONSERVED PROTEIN"/>
    <property type="match status" value="1"/>
</dbReference>
<dbReference type="PANTHER" id="PTHR39515:SF2">
    <property type="entry name" value="HTH-TYPE TRANSCRIPTIONAL REGULATOR RV0880"/>
    <property type="match status" value="1"/>
</dbReference>
<dbReference type="Pfam" id="PF01047">
    <property type="entry name" value="MarR"/>
    <property type="match status" value="1"/>
</dbReference>
<dbReference type="SMART" id="SM00347">
    <property type="entry name" value="HTH_MARR"/>
    <property type="match status" value="1"/>
</dbReference>
<dbReference type="SUPFAM" id="SSF46785">
    <property type="entry name" value="Winged helix' DNA-binding domain"/>
    <property type="match status" value="1"/>
</dbReference>
<dbReference type="PROSITE" id="PS01117">
    <property type="entry name" value="HTH_MARR_1"/>
    <property type="match status" value="1"/>
</dbReference>
<dbReference type="PROSITE" id="PS50995">
    <property type="entry name" value="HTH_MARR_2"/>
    <property type="match status" value="1"/>
</dbReference>
<proteinExistence type="inferred from homology"/>
<comment type="subunit">
    <text evidence="1">Homodimer.</text>
</comment>
<reference key="1">
    <citation type="journal article" date="2001" name="Nature">
        <title>Massive gene decay in the leprosy bacillus.</title>
        <authorList>
            <person name="Cole S.T."/>
            <person name="Eiglmeier K."/>
            <person name="Parkhill J."/>
            <person name="James K.D."/>
            <person name="Thomson N.R."/>
            <person name="Wheeler P.R."/>
            <person name="Honore N."/>
            <person name="Garnier T."/>
            <person name="Churcher C.M."/>
            <person name="Harris D.E."/>
            <person name="Mungall K.L."/>
            <person name="Basham D."/>
            <person name="Brown D."/>
            <person name="Chillingworth T."/>
            <person name="Connor R."/>
            <person name="Davies R.M."/>
            <person name="Devlin K."/>
            <person name="Duthoy S."/>
            <person name="Feltwell T."/>
            <person name="Fraser A."/>
            <person name="Hamlin N."/>
            <person name="Holroyd S."/>
            <person name="Hornsby T."/>
            <person name="Jagels K."/>
            <person name="Lacroix C."/>
            <person name="Maclean J."/>
            <person name="Moule S."/>
            <person name="Murphy L.D."/>
            <person name="Oliver K."/>
            <person name="Quail M.A."/>
            <person name="Rajandream M.A."/>
            <person name="Rutherford K.M."/>
            <person name="Rutter S."/>
            <person name="Seeger K."/>
            <person name="Simon S."/>
            <person name="Simmonds M."/>
            <person name="Skelton J."/>
            <person name="Squares R."/>
            <person name="Squares S."/>
            <person name="Stevens K."/>
            <person name="Taylor K."/>
            <person name="Whitehead S."/>
            <person name="Woodward J.R."/>
            <person name="Barrell B.G."/>
        </authorList>
    </citation>
    <scope>NUCLEOTIDE SEQUENCE [LARGE SCALE GENOMIC DNA]</scope>
    <source>
        <strain>TN</strain>
    </source>
</reference>
<keyword id="KW-0238">DNA-binding</keyword>
<keyword id="KW-1185">Reference proteome</keyword>
<keyword id="KW-0804">Transcription</keyword>
<keyword id="KW-0805">Transcription regulation</keyword>
<gene>
    <name type="ordered locus">ML2140</name>
    <name type="ORF">MLCB57.31</name>
</gene>
<feature type="chain" id="PRO_0000054409" description="Uncharacterized HTH-type transcriptional regulator ML2140">
    <location>
        <begin position="1"/>
        <end position="143"/>
    </location>
</feature>
<feature type="domain" description="HTH marR-type" evidence="2">
    <location>
        <begin position="5"/>
        <end position="137"/>
    </location>
</feature>
<feature type="DNA-binding region" description="H-T-H motif" evidence="2">
    <location>
        <begin position="51"/>
        <end position="74"/>
    </location>
</feature>
<accession>O33060</accession>